<keyword id="KW-0002">3D-structure</keyword>
<keyword id="KW-0175">Coiled coil</keyword>
<keyword id="KW-0472">Membrane</keyword>
<keyword id="KW-0496">Mitochondrion</keyword>
<keyword id="KW-1000">Mitochondrion outer membrane</keyword>
<keyword id="KW-1185">Reference proteome</keyword>
<keyword id="KW-0677">Repeat</keyword>
<keyword id="KW-0853">WD repeat</keyword>
<protein>
    <recommendedName>
        <fullName>CCR4-associated factor 4</fullName>
    </recommendedName>
</protein>
<evidence type="ECO:0000255" key="1"/>
<evidence type="ECO:0000256" key="2">
    <source>
        <dbReference type="SAM" id="MobiDB-lite"/>
    </source>
</evidence>
<evidence type="ECO:0000269" key="3">
    <source>
    </source>
</evidence>
<evidence type="ECO:0000269" key="4">
    <source>
    </source>
</evidence>
<evidence type="ECO:0000269" key="5">
    <source>
    </source>
</evidence>
<evidence type="ECO:0000269" key="6">
    <source>
    </source>
</evidence>
<evidence type="ECO:0000269" key="7">
    <source>
    </source>
</evidence>
<evidence type="ECO:0000269" key="8">
    <source>
    </source>
</evidence>
<evidence type="ECO:0000269" key="9">
    <source>
    </source>
</evidence>
<evidence type="ECO:0000305" key="10"/>
<evidence type="ECO:0007829" key="11">
    <source>
        <dbReference type="PDB" id="2PQR"/>
    </source>
</evidence>
<sequence length="643" mass="72832">MGSGDTRGESSLVAKPIEIILNKLPHAILAQQQFQKYITSPIYRYLSKLLLFREVAWPESTKDTQKGQVGIFSFQNNYADSATTFRILAHLDEQRYPLPNGAAEKNLPSLFEGFKATVSIIQQRLLLDNVDGATNSDKEKYVQLPDINTGFVNKTYSRIDLTHLLEDVETNVENLSINKTLEMDELTRLDSMINELESRKLKILERVKHIDSKSTNLENDVTLIKDRINFIEEYNLEADREQSLRKQMEEERSSEASSFTQNEEAISSLCDVESKDTRLKDFYKMPHEKSHDKNRQIISETYSRNTTAFRMTIPHGEHGNSITALDFDTPWGTLCSSSYQDRIVKVWDLNHGIQVGELPGHLATVNCMQIDKKNYNMLITGSKDATLKLWDLNLSREIYLDHSPLKEKTEEIVTPCIHNFELHKDEITALSFDSEALVSGSRDKKIFHWDLTTGKCIQQLDLIFTPTHSDIKMPARSLNNGACLLGTEAPMIGALQCYNSALATGTKDGIVRLWDLRVGKPVRLLEGHTDGITSLKFDSEKLVTGSMDNSVRIWDLRTSSILDVIAYDLPVSSLDFDGKLITVGANEGGVNVFNMERDEHWMTPEPPHSLDGDELSRRIAIVKYKDGFLINGHNDGDINVWTL</sequence>
<name>CAF4_YEAST</name>
<comment type="function">
    <text evidence="7 8">Involved in mitochondrial fission. Has a partially redundant function to MDV1 in acting as an adapter protein, binding to FIS1 on the mitochondrial outer membrane and recruiting the dynamin-like GTPase DNM1 to form mitochondrial fission complexes. Plays a key role in determining the polarized localization of those DNM1 clusters that are not immediately involved in the mitochondrial fission process.</text>
</comment>
<comment type="subunit">
    <text evidence="3 7 9">Interacts with DNM1, FIS1 and MDV1, components of the mitochondrial fission machinery. Interacts via its WD repeats with DNM1. Interacts with CCR4 and NOT1, components of the CCR4-NOT complex. It is however not a component of the 1.0 MDa CCR4-NOT core complex, but appears to be part of a less characterized, 1.9 MDa CCR4-NOT complex. Interacts with DBF2, another likely component of the 1.9 MDa complex. Interacts with SRB9 and SRB10, components of the SRB8-11 complex.</text>
</comment>
<comment type="interaction">
    <interactant intactId="EBI-26394">
        <id>P36130</id>
    </interactant>
    <interactant intactId="EBI-25059">
        <id>P40515</id>
        <label>FIS1</label>
    </interactant>
    <organismsDiffer>false</organismsDiffer>
    <experiments>4</experiments>
</comment>
<comment type="subcellular location">
    <subcellularLocation>
        <location evidence="4 6 7 9">Mitochondrion outer membrane</location>
        <topology evidence="4 6 7 9">Peripheral membrane protein</topology>
        <orientation evidence="4 6 7 9">Cytoplasmic side</orientation>
    </subcellularLocation>
    <text>Uniformly distributed on the cytoplasmic face of the mitochondrial outer membrane. This localization is dependent on FIS1. Reorganizes to punctate structures on mitochondria, corresponding to mitochondrial constriction sites, at a late step in mitochondrial division.</text>
</comment>
<comment type="miscellaneous">
    <text evidence="5">Present with 589 molecules/cell in log phase SD medium.</text>
</comment>
<comment type="similarity">
    <text evidence="10">Belongs to the WD repeat MDV1/CAF4 family.</text>
</comment>
<comment type="sequence caution" evidence="10">
    <conflict type="erroneous initiation">
        <sequence resource="EMBL-CDS" id="CAA82110"/>
    </conflict>
</comment>
<reference key="1">
    <citation type="journal article" date="1994" name="Nature">
        <title>Complete DNA sequence of yeast chromosome XI.</title>
        <authorList>
            <person name="Dujon B."/>
            <person name="Alexandraki D."/>
            <person name="Andre B."/>
            <person name="Ansorge W."/>
            <person name="Baladron V."/>
            <person name="Ballesta J.P.G."/>
            <person name="Banrevi A."/>
            <person name="Bolle P.-A."/>
            <person name="Bolotin-Fukuhara M."/>
            <person name="Bossier P."/>
            <person name="Bou G."/>
            <person name="Boyer J."/>
            <person name="Buitrago M.J."/>
            <person name="Cheret G."/>
            <person name="Colleaux L."/>
            <person name="Daignan-Fornier B."/>
            <person name="del Rey F."/>
            <person name="Dion C."/>
            <person name="Domdey H."/>
            <person name="Duesterhoeft A."/>
            <person name="Duesterhus S."/>
            <person name="Entian K.-D."/>
            <person name="Erfle H."/>
            <person name="Esteban P.F."/>
            <person name="Feldmann H."/>
            <person name="Fernandes L."/>
            <person name="Fobo G.M."/>
            <person name="Fritz C."/>
            <person name="Fukuhara H."/>
            <person name="Gabel C."/>
            <person name="Gaillon L."/>
            <person name="Garcia-Cantalejo J.M."/>
            <person name="Garcia-Ramirez J.J."/>
            <person name="Gent M.E."/>
            <person name="Ghazvini M."/>
            <person name="Goffeau A."/>
            <person name="Gonzalez A."/>
            <person name="Grothues D."/>
            <person name="Guerreiro P."/>
            <person name="Hegemann J.H."/>
            <person name="Hewitt N."/>
            <person name="Hilger F."/>
            <person name="Hollenberg C.P."/>
            <person name="Horaitis O."/>
            <person name="Indge K.J."/>
            <person name="Jacquier A."/>
            <person name="James C.M."/>
            <person name="Jauniaux J.-C."/>
            <person name="Jimenez A."/>
            <person name="Keuchel H."/>
            <person name="Kirchrath L."/>
            <person name="Kleine K."/>
            <person name="Koetter P."/>
            <person name="Legrain P."/>
            <person name="Liebl S."/>
            <person name="Louis E.J."/>
            <person name="Maia e Silva A."/>
            <person name="Marck C."/>
            <person name="Monnier A.-L."/>
            <person name="Moestl D."/>
            <person name="Mueller S."/>
            <person name="Obermaier B."/>
            <person name="Oliver S.G."/>
            <person name="Pallier C."/>
            <person name="Pascolo S."/>
            <person name="Pfeiffer F."/>
            <person name="Philippsen P."/>
            <person name="Planta R.J."/>
            <person name="Pohl F.M."/>
            <person name="Pohl T.M."/>
            <person name="Poehlmann R."/>
            <person name="Portetelle D."/>
            <person name="Purnelle B."/>
            <person name="Puzos V."/>
            <person name="Ramezani Rad M."/>
            <person name="Rasmussen S.W."/>
            <person name="Remacha M.A."/>
            <person name="Revuelta J.L."/>
            <person name="Richard G.-F."/>
            <person name="Rieger M."/>
            <person name="Rodrigues-Pousada C."/>
            <person name="Rose M."/>
            <person name="Rupp T."/>
            <person name="Santos M.A."/>
            <person name="Schwager C."/>
            <person name="Sensen C."/>
            <person name="Skala J."/>
            <person name="Soares H."/>
            <person name="Sor F."/>
            <person name="Stegemann J."/>
            <person name="Tettelin H."/>
            <person name="Thierry A."/>
            <person name="Tzermia M."/>
            <person name="Urrestarazu L.A."/>
            <person name="van Dyck L."/>
            <person name="van Vliet-Reedijk J.C."/>
            <person name="Valens M."/>
            <person name="Vandenbol M."/>
            <person name="Vilela C."/>
            <person name="Vissers S."/>
            <person name="von Wettstein D."/>
            <person name="Voss H."/>
            <person name="Wiemann S."/>
            <person name="Xu G."/>
            <person name="Zimmermann J."/>
            <person name="Haasemann M."/>
            <person name="Becker I."/>
            <person name="Mewes H.-W."/>
        </authorList>
    </citation>
    <scope>NUCLEOTIDE SEQUENCE [LARGE SCALE GENOMIC DNA]</scope>
    <source>
        <strain>ATCC 204508 / S288c</strain>
    </source>
</reference>
<reference key="2">
    <citation type="journal article" date="2014" name="G3 (Bethesda)">
        <title>The reference genome sequence of Saccharomyces cerevisiae: Then and now.</title>
        <authorList>
            <person name="Engel S.R."/>
            <person name="Dietrich F.S."/>
            <person name="Fisk D.G."/>
            <person name="Binkley G."/>
            <person name="Balakrishnan R."/>
            <person name="Costanzo M.C."/>
            <person name="Dwight S.S."/>
            <person name="Hitz B.C."/>
            <person name="Karra K."/>
            <person name="Nash R.S."/>
            <person name="Weng S."/>
            <person name="Wong E.D."/>
            <person name="Lloyd P."/>
            <person name="Skrzypek M.S."/>
            <person name="Miyasato S.R."/>
            <person name="Simison M."/>
            <person name="Cherry J.M."/>
        </authorList>
    </citation>
    <scope>GENOME REANNOTATION</scope>
    <scope>SEQUENCE REVISION TO 94-95</scope>
    <source>
        <strain>ATCC 204508 / S288c</strain>
    </source>
</reference>
<reference key="3">
    <citation type="journal article" date="2001" name="J. Biol. Chem.">
        <title>Characterization of CAF4 and CAF16 reveals a functional connection between the CCR4-NOT complex and a subset of SRB proteins of the RNA polymerase II holoenzyme.</title>
        <authorList>
            <person name="Liu H.-Y."/>
            <person name="Chiang Y.-C."/>
            <person name="Pan J."/>
            <person name="Chen J."/>
            <person name="Salvadore C."/>
            <person name="Audino D.C."/>
            <person name="Badarinarayana V."/>
            <person name="Palaniswamy V."/>
            <person name="Anderson B."/>
            <person name="Denis C.L."/>
        </authorList>
    </citation>
    <scope>INTERACTION WITH CCR4; DBF2; NOT1; SRB9 AND SRB10</scope>
    <scope>SUBUNIT</scope>
</reference>
<reference key="4">
    <citation type="journal article" date="2003" name="Nature">
        <title>Sequencing and comparison of yeast species to identify genes and regulatory elements.</title>
        <authorList>
            <person name="Kellis M."/>
            <person name="Patterson N."/>
            <person name="Endrizzi M."/>
            <person name="Birren B.W."/>
            <person name="Lander E.S."/>
        </authorList>
    </citation>
    <scope>IDENTIFICATION OF PROBABLE INITIATION SITE</scope>
</reference>
<reference key="5">
    <citation type="journal article" date="2003" name="Nature">
        <title>Global analysis of protein localization in budding yeast.</title>
        <authorList>
            <person name="Huh W.-K."/>
            <person name="Falvo J.V."/>
            <person name="Gerke L.C."/>
            <person name="Carroll A.S."/>
            <person name="Howson R.W."/>
            <person name="Weissman J.S."/>
            <person name="O'Shea E.K."/>
        </authorList>
    </citation>
    <scope>SUBCELLULAR LOCATION [LARGE SCALE ANALYSIS]</scope>
</reference>
<reference key="6">
    <citation type="journal article" date="2003" name="Nature">
        <title>Global analysis of protein expression in yeast.</title>
        <authorList>
            <person name="Ghaemmaghami S."/>
            <person name="Huh W.-K."/>
            <person name="Bower K."/>
            <person name="Howson R.W."/>
            <person name="Belle A."/>
            <person name="Dephoure N."/>
            <person name="O'Shea E.K."/>
            <person name="Weissman J.S."/>
        </authorList>
    </citation>
    <scope>LEVEL OF PROTEIN EXPRESSION [LARGE SCALE ANALYSIS]</scope>
</reference>
<reference key="7">
    <citation type="journal article" date="2003" name="Proc. Natl. Acad. Sci. U.S.A.">
        <title>The proteome of Saccharomyces cerevisiae mitochondria.</title>
        <authorList>
            <person name="Sickmann A."/>
            <person name="Reinders J."/>
            <person name="Wagner Y."/>
            <person name="Joppich C."/>
            <person name="Zahedi R.P."/>
            <person name="Meyer H.E."/>
            <person name="Schoenfisch B."/>
            <person name="Perschil I."/>
            <person name="Chacinska A."/>
            <person name="Guiard B."/>
            <person name="Rehling P."/>
            <person name="Pfanner N."/>
            <person name="Meisinger C."/>
        </authorList>
    </citation>
    <scope>SUBCELLULAR LOCATION [LARGE SCALE ANALYSIS]</scope>
    <source>
        <strain>ATCC 76625 / YPH499</strain>
    </source>
</reference>
<reference key="8">
    <citation type="journal article" date="2005" name="J. Cell Biol.">
        <title>The WD40 protein Caf4p is a component of the mitochondrial fission machinery and recruits Dnm1p to mitochondria.</title>
        <authorList>
            <person name="Griffin E.E."/>
            <person name="Graumann J."/>
            <person name="Chan D.C."/>
        </authorList>
    </citation>
    <scope>FUNCTION IN MITOCHONDRIAL FISSION</scope>
    <scope>INTERACTION WITH DNM1; FIS1 AND MDV1</scope>
    <scope>SUBCELLULAR LOCATION</scope>
</reference>
<reference key="9">
    <citation type="journal article" date="2006" name="J. Cell Sci.">
        <title>Fis1p and Caf4p, but not Mdv1p, determine the polar localization of Dnm1p clusters on the mitochondrial surface.</title>
        <authorList>
            <person name="Schauss A.C."/>
            <person name="Bewersdorf J."/>
            <person name="Jakobs S."/>
        </authorList>
    </citation>
    <scope>FUNCTION IN MITOCHONDRIAL FISSION</scope>
</reference>
<reference key="10">
    <citation type="journal article" date="2007" name="Proc. Natl. Acad. Sci. U.S.A.">
        <title>Structural basis for recruitment of mitochondrial fission complexes by Fis1.</title>
        <authorList>
            <person name="Zhang Y."/>
            <person name="Chan D.C."/>
        </authorList>
    </citation>
    <scope>X-RAY CRYSTALLOGRAPHY (1.88 ANGSTROMS) OF 65-124</scope>
    <scope>INTERACTION WITH FIS1</scope>
    <scope>MUTAGENESIS OF 85-PHE-ARG-86; LEU-88; LEU-110; PHE-111 AND PHE-114</scope>
    <scope>SUBCELLULAR LOCATION</scope>
</reference>
<proteinExistence type="evidence at protein level"/>
<gene>
    <name type="primary">CAF4</name>
    <name type="ordered locus">YKR036C</name>
</gene>
<feature type="chain" id="PRO_0000051478" description="CCR4-associated factor 4">
    <location>
        <begin position="1"/>
        <end position="643"/>
    </location>
</feature>
<feature type="repeat" description="WD 1">
    <location>
        <begin position="317"/>
        <end position="357"/>
    </location>
</feature>
<feature type="repeat" description="WD 2">
    <location>
        <begin position="360"/>
        <end position="400"/>
    </location>
</feature>
<feature type="repeat" description="WD 3">
    <location>
        <begin position="422"/>
        <end position="461"/>
    </location>
</feature>
<feature type="repeat" description="WD 4">
    <location>
        <begin position="479"/>
        <end position="526"/>
    </location>
</feature>
<feature type="repeat" description="WD 5">
    <location>
        <begin position="527"/>
        <end position="566"/>
    </location>
</feature>
<feature type="repeat" description="WD 6">
    <location>
        <begin position="568"/>
        <end position="603"/>
    </location>
</feature>
<feature type="repeat" description="WD 7">
    <location>
        <begin position="614"/>
        <end position="643"/>
    </location>
</feature>
<feature type="region of interest" description="Required for interaction with FIS1 and MDV1" evidence="7">
    <location>
        <begin position="1"/>
        <end position="274"/>
    </location>
</feature>
<feature type="region of interest" description="Sufficient for interaction with FIS1">
    <location>
        <begin position="74"/>
        <end position="126"/>
    </location>
</feature>
<feature type="region of interest" description="Disordered" evidence="2">
    <location>
        <begin position="243"/>
        <end position="262"/>
    </location>
</feature>
<feature type="coiled-coil region" evidence="1">
    <location>
        <begin position="160"/>
        <end position="255"/>
    </location>
</feature>
<feature type="compositionally biased region" description="Basic and acidic residues" evidence="2">
    <location>
        <begin position="243"/>
        <end position="254"/>
    </location>
</feature>
<feature type="mutagenesis site" description="Abolishes interaction with FIS1." evidence="9">
    <original>FR</original>
    <variation>AA</variation>
    <location>
        <begin position="85"/>
        <end position="86"/>
    </location>
</feature>
<feature type="mutagenesis site" description="Abolishes interaction with FIS1." evidence="9">
    <original>L</original>
    <variation>A</variation>
    <location>
        <position position="88"/>
    </location>
</feature>
<feature type="mutagenesis site" description="Abolishes interaction with FIS1." evidence="9">
    <original>L</original>
    <variation>A</variation>
    <location>
        <position position="110"/>
    </location>
</feature>
<feature type="mutagenesis site" description="Abolishes interaction with FIS1." evidence="9">
    <original>F</original>
    <variation>A</variation>
    <location>
        <position position="111"/>
    </location>
</feature>
<feature type="mutagenesis site" description="Abolishes interaction with FIS1." evidence="9">
    <original>F</original>
    <variation>A</variation>
    <location>
        <position position="114"/>
    </location>
</feature>
<feature type="sequence conflict" description="In Ref. 1; CAA82110." evidence="10" ref="1">
    <original>QR</original>
    <variation>HG</variation>
    <location>
        <begin position="94"/>
        <end position="95"/>
    </location>
</feature>
<feature type="helix" evidence="11">
    <location>
        <begin position="83"/>
        <end position="88"/>
    </location>
</feature>
<feature type="turn" evidence="11">
    <location>
        <begin position="93"/>
        <end position="95"/>
    </location>
</feature>
<feature type="strand" evidence="11">
    <location>
        <begin position="100"/>
        <end position="102"/>
    </location>
</feature>
<feature type="helix" evidence="11">
    <location>
        <begin position="110"/>
        <end position="121"/>
    </location>
</feature>
<accession>P36130</accession>
<accession>D6VX99</accession>
<dbReference type="EMBL" id="Z28261">
    <property type="protein sequence ID" value="CAA82110.1"/>
    <property type="status" value="ALT_INIT"/>
    <property type="molecule type" value="Genomic_DNA"/>
</dbReference>
<dbReference type="EMBL" id="BK006944">
    <property type="protein sequence ID" value="DAA09189.2"/>
    <property type="molecule type" value="Genomic_DNA"/>
</dbReference>
<dbReference type="PIR" id="S38108">
    <property type="entry name" value="S38108"/>
</dbReference>
<dbReference type="RefSeq" id="NP_012962.3">
    <property type="nucleotide sequence ID" value="NM_001179826.2"/>
</dbReference>
<dbReference type="PDB" id="2PQR">
    <property type="method" value="X-ray"/>
    <property type="resolution" value="1.88 A"/>
    <property type="chains" value="C/D=65-124"/>
</dbReference>
<dbReference type="PDBsum" id="2PQR"/>
<dbReference type="SMR" id="P36130"/>
<dbReference type="BioGRID" id="34167">
    <property type="interactions" value="132"/>
</dbReference>
<dbReference type="DIP" id="DIP-5945N"/>
<dbReference type="FunCoup" id="P36130">
    <property type="interactions" value="91"/>
</dbReference>
<dbReference type="IntAct" id="P36130">
    <property type="interactions" value="32"/>
</dbReference>
<dbReference type="MINT" id="P36130"/>
<dbReference type="STRING" id="4932.YKR036C"/>
<dbReference type="iPTMnet" id="P36130"/>
<dbReference type="PaxDb" id="4932-YKR036C"/>
<dbReference type="PeptideAtlas" id="P36130"/>
<dbReference type="EnsemblFungi" id="YKR036C_mRNA">
    <property type="protein sequence ID" value="YKR036C"/>
    <property type="gene ID" value="YKR036C"/>
</dbReference>
<dbReference type="GeneID" id="853908"/>
<dbReference type="KEGG" id="sce:YKR036C"/>
<dbReference type="AGR" id="SGD:S000001744"/>
<dbReference type="SGD" id="S000001744">
    <property type="gene designation" value="CAF4"/>
</dbReference>
<dbReference type="VEuPathDB" id="FungiDB:YKR036C"/>
<dbReference type="eggNOG" id="KOG4155">
    <property type="taxonomic scope" value="Eukaryota"/>
</dbReference>
<dbReference type="GeneTree" id="ENSGT00940000176613"/>
<dbReference type="HOGENOM" id="CLU_012350_1_0_1"/>
<dbReference type="InParanoid" id="P36130"/>
<dbReference type="OMA" id="SHRTWIC"/>
<dbReference type="OrthoDB" id="496at2759"/>
<dbReference type="BioCyc" id="YEAST:G3O-32008-MONOMER"/>
<dbReference type="BioGRID-ORCS" id="853908">
    <property type="hits" value="0 hits in 10 CRISPR screens"/>
</dbReference>
<dbReference type="EvolutionaryTrace" id="P36130"/>
<dbReference type="PRO" id="PR:P36130"/>
<dbReference type="Proteomes" id="UP000002311">
    <property type="component" value="Chromosome XI"/>
</dbReference>
<dbReference type="RNAct" id="P36130">
    <property type="molecule type" value="protein"/>
</dbReference>
<dbReference type="GO" id="GO:0030014">
    <property type="term" value="C:CCR4-NOT complex"/>
    <property type="evidence" value="ECO:0000314"/>
    <property type="project" value="SGD"/>
</dbReference>
<dbReference type="GO" id="GO:0005741">
    <property type="term" value="C:mitochondrial outer membrane"/>
    <property type="evidence" value="ECO:0007669"/>
    <property type="project" value="UniProtKB-SubCell"/>
</dbReference>
<dbReference type="GO" id="GO:0005739">
    <property type="term" value="C:mitochondrion"/>
    <property type="evidence" value="ECO:0000314"/>
    <property type="project" value="SGD"/>
</dbReference>
<dbReference type="GO" id="GO:0000266">
    <property type="term" value="P:mitochondrial fission"/>
    <property type="evidence" value="ECO:0000315"/>
    <property type="project" value="SGD"/>
</dbReference>
<dbReference type="GO" id="GO:0016559">
    <property type="term" value="P:peroxisome fission"/>
    <property type="evidence" value="ECO:0000316"/>
    <property type="project" value="SGD"/>
</dbReference>
<dbReference type="GO" id="GO:0006357">
    <property type="term" value="P:regulation of transcription by RNA polymerase II"/>
    <property type="evidence" value="ECO:0000315"/>
    <property type="project" value="SGD"/>
</dbReference>
<dbReference type="CDD" id="cd22881">
    <property type="entry name" value="Mdv1_N"/>
    <property type="match status" value="1"/>
</dbReference>
<dbReference type="CDD" id="cd00200">
    <property type="entry name" value="WD40"/>
    <property type="match status" value="1"/>
</dbReference>
<dbReference type="Gene3D" id="1.20.5.170">
    <property type="match status" value="1"/>
</dbReference>
<dbReference type="Gene3D" id="6.10.250.1070">
    <property type="match status" value="1"/>
</dbReference>
<dbReference type="Gene3D" id="2.130.10.10">
    <property type="entry name" value="YVTN repeat-like/Quinoprotein amine dehydrogenase"/>
    <property type="match status" value="2"/>
</dbReference>
<dbReference type="InterPro" id="IPR021653">
    <property type="entry name" value="Caf4"/>
</dbReference>
<dbReference type="InterPro" id="IPR020472">
    <property type="entry name" value="G-protein_beta_WD-40_rep"/>
</dbReference>
<dbReference type="InterPro" id="IPR015943">
    <property type="entry name" value="WD40/YVTN_repeat-like_dom_sf"/>
</dbReference>
<dbReference type="InterPro" id="IPR019775">
    <property type="entry name" value="WD40_repeat_CS"/>
</dbReference>
<dbReference type="InterPro" id="IPR036322">
    <property type="entry name" value="WD40_repeat_dom_sf"/>
</dbReference>
<dbReference type="InterPro" id="IPR001680">
    <property type="entry name" value="WD40_rpt"/>
</dbReference>
<dbReference type="PANTHER" id="PTHR19848:SF8">
    <property type="entry name" value="F-BOX AND WD REPEAT DOMAIN CONTAINING 7"/>
    <property type="match status" value="1"/>
</dbReference>
<dbReference type="PANTHER" id="PTHR19848">
    <property type="entry name" value="WD40 REPEAT PROTEIN"/>
    <property type="match status" value="1"/>
</dbReference>
<dbReference type="Pfam" id="PF11615">
    <property type="entry name" value="Caf4"/>
    <property type="match status" value="1"/>
</dbReference>
<dbReference type="Pfam" id="PF00400">
    <property type="entry name" value="WD40"/>
    <property type="match status" value="4"/>
</dbReference>
<dbReference type="PRINTS" id="PR00320">
    <property type="entry name" value="GPROTEINBRPT"/>
</dbReference>
<dbReference type="SMART" id="SM00320">
    <property type="entry name" value="WD40"/>
    <property type="match status" value="7"/>
</dbReference>
<dbReference type="SUPFAM" id="SSF50978">
    <property type="entry name" value="WD40 repeat-like"/>
    <property type="match status" value="1"/>
</dbReference>
<dbReference type="PROSITE" id="PS00678">
    <property type="entry name" value="WD_REPEATS_1"/>
    <property type="match status" value="4"/>
</dbReference>
<dbReference type="PROSITE" id="PS50082">
    <property type="entry name" value="WD_REPEATS_2"/>
    <property type="match status" value="5"/>
</dbReference>
<dbReference type="PROSITE" id="PS50294">
    <property type="entry name" value="WD_REPEATS_REGION"/>
    <property type="match status" value="1"/>
</dbReference>
<organism>
    <name type="scientific">Saccharomyces cerevisiae (strain ATCC 204508 / S288c)</name>
    <name type="common">Baker's yeast</name>
    <dbReference type="NCBI Taxonomy" id="559292"/>
    <lineage>
        <taxon>Eukaryota</taxon>
        <taxon>Fungi</taxon>
        <taxon>Dikarya</taxon>
        <taxon>Ascomycota</taxon>
        <taxon>Saccharomycotina</taxon>
        <taxon>Saccharomycetes</taxon>
        <taxon>Saccharomycetales</taxon>
        <taxon>Saccharomycetaceae</taxon>
        <taxon>Saccharomyces</taxon>
    </lineage>
</organism>